<gene>
    <name evidence="1" type="primary">truB</name>
    <name type="ordered locus">PSHAa0999</name>
</gene>
<reference key="1">
    <citation type="journal article" date="2005" name="Genome Res.">
        <title>Coping with cold: the genome of the versatile marine Antarctica bacterium Pseudoalteromonas haloplanktis TAC125.</title>
        <authorList>
            <person name="Medigue C."/>
            <person name="Krin E."/>
            <person name="Pascal G."/>
            <person name="Barbe V."/>
            <person name="Bernsel A."/>
            <person name="Bertin P.N."/>
            <person name="Cheung F."/>
            <person name="Cruveiller S."/>
            <person name="D'Amico S."/>
            <person name="Duilio A."/>
            <person name="Fang G."/>
            <person name="Feller G."/>
            <person name="Ho C."/>
            <person name="Mangenot S."/>
            <person name="Marino G."/>
            <person name="Nilsson J."/>
            <person name="Parrilli E."/>
            <person name="Rocha E.P.C."/>
            <person name="Rouy Z."/>
            <person name="Sekowska A."/>
            <person name="Tutino M.L."/>
            <person name="Vallenet D."/>
            <person name="von Heijne G."/>
            <person name="Danchin A."/>
        </authorList>
    </citation>
    <scope>NUCLEOTIDE SEQUENCE [LARGE SCALE GENOMIC DNA]</scope>
    <source>
        <strain>TAC 125</strain>
    </source>
</reference>
<comment type="function">
    <text evidence="1">Responsible for synthesis of pseudouridine from uracil-55 in the psi GC loop of transfer RNAs.</text>
</comment>
<comment type="catalytic activity">
    <reaction evidence="1">
        <text>uridine(55) in tRNA = pseudouridine(55) in tRNA</text>
        <dbReference type="Rhea" id="RHEA:42532"/>
        <dbReference type="Rhea" id="RHEA-COMP:10101"/>
        <dbReference type="Rhea" id="RHEA-COMP:10102"/>
        <dbReference type="ChEBI" id="CHEBI:65314"/>
        <dbReference type="ChEBI" id="CHEBI:65315"/>
        <dbReference type="EC" id="5.4.99.25"/>
    </reaction>
</comment>
<comment type="similarity">
    <text evidence="1">Belongs to the pseudouridine synthase TruB family. Type 1 subfamily.</text>
</comment>
<keyword id="KW-0413">Isomerase</keyword>
<keyword id="KW-1185">Reference proteome</keyword>
<keyword id="KW-0819">tRNA processing</keyword>
<sequence length="319" mass="34865">MAKRSKGRPVDGILLLNKPIGISSNKALQQTKGVYFAQKAGHTGALDPLATGMLPICFGEATKFTQFLLDTDKTYVVRAKLGERTTTSDSDGEIVSTKDVNVTREQLIKEIAAFVGESDQYPSMYSALKYQGRPLYKYAREGIEVPRKCRKINVFSLTFDEFDEVNNVIQMTAHVSKGTYIRTIVDDLGEKLGCGAHVVMLHRTAVGQYPAEKMVSLDEIEALLAKAKDEEVAPSTYLDALLLPLDTALVDLPVVEISKEQGSIFSHGQAIDLDIDLPEGAIKVVADGIFIGTGERNASGHLKVKRGLASQQDDYVKPE</sequence>
<accession>Q3IJ75</accession>
<dbReference type="EC" id="5.4.99.25" evidence="1"/>
<dbReference type="EMBL" id="CR954246">
    <property type="protein sequence ID" value="CAI86077.1"/>
    <property type="molecule type" value="Genomic_DNA"/>
</dbReference>
<dbReference type="SMR" id="Q3IJ75"/>
<dbReference type="STRING" id="326442.PSHAa0999"/>
<dbReference type="KEGG" id="pha:PSHAa0999"/>
<dbReference type="PATRIC" id="fig|326442.8.peg.959"/>
<dbReference type="eggNOG" id="COG0130">
    <property type="taxonomic scope" value="Bacteria"/>
</dbReference>
<dbReference type="HOGENOM" id="CLU_032087_0_3_6"/>
<dbReference type="BioCyc" id="PHAL326442:PSHA_RS04880-MONOMER"/>
<dbReference type="Proteomes" id="UP000006843">
    <property type="component" value="Chromosome I"/>
</dbReference>
<dbReference type="GO" id="GO:0003723">
    <property type="term" value="F:RNA binding"/>
    <property type="evidence" value="ECO:0007669"/>
    <property type="project" value="InterPro"/>
</dbReference>
<dbReference type="GO" id="GO:0160148">
    <property type="term" value="F:tRNA pseudouridine(55) synthase activity"/>
    <property type="evidence" value="ECO:0007669"/>
    <property type="project" value="UniProtKB-EC"/>
</dbReference>
<dbReference type="GO" id="GO:1990481">
    <property type="term" value="P:mRNA pseudouridine synthesis"/>
    <property type="evidence" value="ECO:0007669"/>
    <property type="project" value="TreeGrafter"/>
</dbReference>
<dbReference type="GO" id="GO:0031119">
    <property type="term" value="P:tRNA pseudouridine synthesis"/>
    <property type="evidence" value="ECO:0007669"/>
    <property type="project" value="UniProtKB-UniRule"/>
</dbReference>
<dbReference type="CDD" id="cd02573">
    <property type="entry name" value="PseudoU_synth_EcTruB"/>
    <property type="match status" value="1"/>
</dbReference>
<dbReference type="CDD" id="cd21152">
    <property type="entry name" value="PUA_TruB_bacterial"/>
    <property type="match status" value="1"/>
</dbReference>
<dbReference type="Gene3D" id="3.30.2350.10">
    <property type="entry name" value="Pseudouridine synthase"/>
    <property type="match status" value="1"/>
</dbReference>
<dbReference type="Gene3D" id="2.30.130.10">
    <property type="entry name" value="PUA domain"/>
    <property type="match status" value="1"/>
</dbReference>
<dbReference type="HAMAP" id="MF_01080">
    <property type="entry name" value="TruB_bact"/>
    <property type="match status" value="1"/>
</dbReference>
<dbReference type="InterPro" id="IPR020103">
    <property type="entry name" value="PsdUridine_synth_cat_dom_sf"/>
</dbReference>
<dbReference type="InterPro" id="IPR002501">
    <property type="entry name" value="PsdUridine_synth_N"/>
</dbReference>
<dbReference type="InterPro" id="IPR036974">
    <property type="entry name" value="PUA_sf"/>
</dbReference>
<dbReference type="InterPro" id="IPR014780">
    <property type="entry name" value="tRNA_psdUridine_synth_TruB"/>
</dbReference>
<dbReference type="InterPro" id="IPR015240">
    <property type="entry name" value="tRNA_sdUridine_synth_fam1_C"/>
</dbReference>
<dbReference type="InterPro" id="IPR032819">
    <property type="entry name" value="TruB_C"/>
</dbReference>
<dbReference type="NCBIfam" id="TIGR00431">
    <property type="entry name" value="TruB"/>
    <property type="match status" value="1"/>
</dbReference>
<dbReference type="PANTHER" id="PTHR13767:SF2">
    <property type="entry name" value="PSEUDOURIDYLATE SYNTHASE TRUB1"/>
    <property type="match status" value="1"/>
</dbReference>
<dbReference type="PANTHER" id="PTHR13767">
    <property type="entry name" value="TRNA-PSEUDOURIDINE SYNTHASE"/>
    <property type="match status" value="1"/>
</dbReference>
<dbReference type="Pfam" id="PF09157">
    <property type="entry name" value="TruB-C_2"/>
    <property type="match status" value="1"/>
</dbReference>
<dbReference type="Pfam" id="PF16198">
    <property type="entry name" value="TruB_C_2"/>
    <property type="match status" value="1"/>
</dbReference>
<dbReference type="Pfam" id="PF01509">
    <property type="entry name" value="TruB_N"/>
    <property type="match status" value="1"/>
</dbReference>
<dbReference type="SUPFAM" id="SSF55120">
    <property type="entry name" value="Pseudouridine synthase"/>
    <property type="match status" value="1"/>
</dbReference>
<organism>
    <name type="scientific">Pseudoalteromonas translucida (strain TAC 125)</name>
    <dbReference type="NCBI Taxonomy" id="326442"/>
    <lineage>
        <taxon>Bacteria</taxon>
        <taxon>Pseudomonadati</taxon>
        <taxon>Pseudomonadota</taxon>
        <taxon>Gammaproteobacteria</taxon>
        <taxon>Alteromonadales</taxon>
        <taxon>Pseudoalteromonadaceae</taxon>
        <taxon>Pseudoalteromonas</taxon>
    </lineage>
</organism>
<protein>
    <recommendedName>
        <fullName evidence="1">tRNA pseudouridine synthase B</fullName>
        <ecNumber evidence="1">5.4.99.25</ecNumber>
    </recommendedName>
    <alternativeName>
        <fullName evidence="1">tRNA pseudouridine(55) synthase</fullName>
        <shortName evidence="1">Psi55 synthase</shortName>
    </alternativeName>
    <alternativeName>
        <fullName evidence="1">tRNA pseudouridylate synthase</fullName>
    </alternativeName>
    <alternativeName>
        <fullName evidence="1">tRNA-uridine isomerase</fullName>
    </alternativeName>
</protein>
<evidence type="ECO:0000255" key="1">
    <source>
        <dbReference type="HAMAP-Rule" id="MF_01080"/>
    </source>
</evidence>
<feature type="chain" id="PRO_0000229370" description="tRNA pseudouridine synthase B">
    <location>
        <begin position="1"/>
        <end position="319"/>
    </location>
</feature>
<feature type="active site" description="Nucleophile" evidence="1">
    <location>
        <position position="47"/>
    </location>
</feature>
<name>TRUB_PSET1</name>
<proteinExistence type="inferred from homology"/>